<protein>
    <recommendedName>
        <fullName>Epithelial splicing regulatory protein 1</fullName>
    </recommendedName>
    <alternativeName>
        <fullName>RNA-binding motif protein 35A</fullName>
    </alternativeName>
    <alternativeName>
        <fullName>RNA-binding protein 35A</fullName>
    </alternativeName>
</protein>
<comment type="function">
    <text evidence="2 6">mRNA splicing factor that regulates the formation of epithelial cell-specific isoforms. Specifically regulates the expression of FGFR2-IIIb, an epithelial cell-specific isoform of FGFR2. Also regulates the splicing of CD44, CTNND1, ENAH, 3 transcripts that undergo changes in splicing during the epithelial-to-mesenchymal transition (EMT). Acts by directly binding specific sequences in mRNAs. Binds the GU-rich sequence motifs in the ISE/ISS-3, a cis-element regulatory region present in the mRNA of FGFR2 (By similarity). Regulates splicing and expression of genes involved in inner ear development, auditory hair cell differentiation, and cell fate specification in the cochlear epithelium (PubMed:29107558).</text>
</comment>
<comment type="subcellular location">
    <subcellularLocation>
        <location evidence="1">Nucleus</location>
    </subcellularLocation>
</comment>
<comment type="alternative products">
    <event type="alternative splicing"/>
    <isoform>
        <id>Q3US41-1</id>
        <name>1</name>
        <sequence type="displayed"/>
    </isoform>
    <isoform>
        <id>Q3US41-2</id>
        <name>2</name>
        <sequence type="described" ref="VSP_022468 VSP_022472 VSP_022473"/>
    </isoform>
    <isoform>
        <id>Q3US41-3</id>
        <name>3</name>
        <sequence type="described" ref="VSP_022468 VSP_022471 VSP_022472 VSP_022473"/>
    </isoform>
    <isoform>
        <id>Q3US41-4</id>
        <name>4</name>
        <sequence type="described" ref="VSP_022468 VSP_022469 VSP_022470"/>
    </isoform>
    <isoform>
        <id>Q3US41-5</id>
        <name>5</name>
        <sequence type="described" ref="VSP_022468 VSP_022471"/>
    </isoform>
</comment>
<comment type="tissue specificity">
    <text evidence="5">Epithelial cell-specific. Epithelial-specific expression in diverse tissues and organs with particularly notable levels of expression in skin and gastrointestinal epithelia.</text>
</comment>
<comment type="developmental stage">
    <text evidence="6">It is broadly expressed throughout the epithelium of the otic vesicle at embryonic day 10.5 dpc, but it is absent from the surrounding mesenchyme. High expression is detected in sensory and non-sensory epithelial progenitors during cochlear and vestibular morphogenesis, although the level is weaker at later stages of inner ear development.</text>
</comment>
<comment type="disruption phenotype">
    <text evidence="6">Homozygous knockout mice die soon after birth due to complications from cleft-lip and palate defects. Knockout embryos show alterations in inner ear morphogenesis and auditory hair cell differentiation.</text>
</comment>
<comment type="similarity">
    <text evidence="9">Belongs to the ESRP family.</text>
</comment>
<comment type="sequence caution" evidence="9">
    <conflict type="erroneous gene model prediction">
        <sequence resource="EMBL-CDS" id="CAM20812"/>
    </conflict>
</comment>
<comment type="sequence caution" evidence="9">
    <conflict type="erroneous gene model prediction">
        <sequence resource="EMBL-CDS" id="CAM20813"/>
    </conflict>
</comment>
<comment type="sequence caution" evidence="9">
    <conflict type="erroneous gene model prediction">
        <sequence resource="EMBL-CDS" id="CAM20814"/>
    </conflict>
</comment>
<comment type="sequence caution" evidence="9">
    <conflict type="erroneous gene model prediction">
        <sequence resource="EMBL-CDS" id="CAM20816"/>
    </conflict>
</comment>
<comment type="sequence caution" evidence="9">
    <conflict type="erroneous gene model prediction">
        <sequence resource="EMBL-CDS" id="EDL05650"/>
    </conflict>
</comment>
<organism>
    <name type="scientific">Mus musculus</name>
    <name type="common">Mouse</name>
    <dbReference type="NCBI Taxonomy" id="10090"/>
    <lineage>
        <taxon>Eukaryota</taxon>
        <taxon>Metazoa</taxon>
        <taxon>Chordata</taxon>
        <taxon>Craniata</taxon>
        <taxon>Vertebrata</taxon>
        <taxon>Euteleostomi</taxon>
        <taxon>Mammalia</taxon>
        <taxon>Eutheria</taxon>
        <taxon>Euarchontoglires</taxon>
        <taxon>Glires</taxon>
        <taxon>Rodentia</taxon>
        <taxon>Myomorpha</taxon>
        <taxon>Muroidea</taxon>
        <taxon>Muridae</taxon>
        <taxon>Murinae</taxon>
        <taxon>Mus</taxon>
        <taxon>Mus</taxon>
    </lineage>
</organism>
<evidence type="ECO:0000250" key="1"/>
<evidence type="ECO:0000250" key="2">
    <source>
        <dbReference type="UniProtKB" id="Q6NXG1"/>
    </source>
</evidence>
<evidence type="ECO:0000250" key="3">
    <source>
        <dbReference type="UniProtKB" id="Q9H6T0"/>
    </source>
</evidence>
<evidence type="ECO:0000255" key="4">
    <source>
        <dbReference type="PROSITE-ProRule" id="PRU00176"/>
    </source>
</evidence>
<evidence type="ECO:0000269" key="5">
    <source>
    </source>
</evidence>
<evidence type="ECO:0000269" key="6">
    <source>
    </source>
</evidence>
<evidence type="ECO:0000303" key="7">
    <source>
    </source>
</evidence>
<evidence type="ECO:0000303" key="8">
    <source>
    </source>
</evidence>
<evidence type="ECO:0000305" key="9"/>
<keyword id="KW-0025">Alternative splicing</keyword>
<keyword id="KW-0488">Methylation</keyword>
<keyword id="KW-0507">mRNA processing</keyword>
<keyword id="KW-0508">mRNA splicing</keyword>
<keyword id="KW-0539">Nucleus</keyword>
<keyword id="KW-0597">Phosphoprotein</keyword>
<keyword id="KW-1185">Reference proteome</keyword>
<keyword id="KW-0677">Repeat</keyword>
<keyword id="KW-0694">RNA-binding</keyword>
<dbReference type="EMBL" id="AK042164">
    <property type="protein sequence ID" value="BAC31189.1"/>
    <property type="molecule type" value="mRNA"/>
</dbReference>
<dbReference type="EMBL" id="AK140848">
    <property type="protein sequence ID" value="BAE24496.1"/>
    <property type="molecule type" value="mRNA"/>
</dbReference>
<dbReference type="EMBL" id="AK166376">
    <property type="protein sequence ID" value="BAE38739.1"/>
    <property type="molecule type" value="mRNA"/>
</dbReference>
<dbReference type="EMBL" id="AL772170">
    <property type="protein sequence ID" value="CAM20812.1"/>
    <property type="status" value="ALT_SEQ"/>
    <property type="molecule type" value="Genomic_DNA"/>
</dbReference>
<dbReference type="EMBL" id="AL772170">
    <property type="protein sequence ID" value="CAM20813.1"/>
    <property type="status" value="ALT_SEQ"/>
    <property type="molecule type" value="Genomic_DNA"/>
</dbReference>
<dbReference type="EMBL" id="AL772170">
    <property type="protein sequence ID" value="CAM20814.1"/>
    <property type="status" value="ALT_SEQ"/>
    <property type="molecule type" value="Genomic_DNA"/>
</dbReference>
<dbReference type="EMBL" id="AL772170">
    <property type="protein sequence ID" value="CAM20815.1"/>
    <property type="molecule type" value="Genomic_DNA"/>
</dbReference>
<dbReference type="EMBL" id="AL772170">
    <property type="protein sequence ID" value="CAM20816.1"/>
    <property type="status" value="ALT_SEQ"/>
    <property type="molecule type" value="Genomic_DNA"/>
</dbReference>
<dbReference type="EMBL" id="CH466538">
    <property type="protein sequence ID" value="EDL05650.1"/>
    <property type="status" value="ALT_SEQ"/>
    <property type="molecule type" value="Genomic_DNA"/>
</dbReference>
<dbReference type="EMBL" id="BC031468">
    <property type="protein sequence ID" value="AAH31468.1"/>
    <property type="molecule type" value="mRNA"/>
</dbReference>
<dbReference type="EMBL" id="BC059280">
    <property type="protein sequence ID" value="AAH59280.1"/>
    <property type="molecule type" value="mRNA"/>
</dbReference>
<dbReference type="CCDS" id="CCDS84703.1">
    <molecule id="Q3US41-3"/>
</dbReference>
<dbReference type="RefSeq" id="NP_001277312.1">
    <molecule id="Q3US41-1"/>
    <property type="nucleotide sequence ID" value="NM_001290383.1"/>
</dbReference>
<dbReference type="RefSeq" id="NP_001333981.1">
    <molecule id="Q3US41-3"/>
    <property type="nucleotide sequence ID" value="NM_001347052.1"/>
</dbReference>
<dbReference type="RefSeq" id="NP_918944.2">
    <property type="nucleotide sequence ID" value="NM_194055.3"/>
</dbReference>
<dbReference type="RefSeq" id="XP_006537778.1">
    <molecule id="Q3US41-5"/>
    <property type="nucleotide sequence ID" value="XM_006537715.1"/>
</dbReference>
<dbReference type="RefSeq" id="XP_006537781.1">
    <molecule id="Q3US41-2"/>
    <property type="nucleotide sequence ID" value="XM_006537718.1"/>
</dbReference>
<dbReference type="SMR" id="Q3US41"/>
<dbReference type="BioGRID" id="228933">
    <property type="interactions" value="1"/>
</dbReference>
<dbReference type="FunCoup" id="Q3US41">
    <property type="interactions" value="1417"/>
</dbReference>
<dbReference type="STRING" id="10090.ENSMUSP00000103947"/>
<dbReference type="GlyGen" id="Q3US41">
    <property type="glycosylation" value="1 site"/>
</dbReference>
<dbReference type="iPTMnet" id="Q3US41"/>
<dbReference type="PhosphoSitePlus" id="Q3US41"/>
<dbReference type="PaxDb" id="10090-ENSMUSP00000103947"/>
<dbReference type="PeptideAtlas" id="Q3US41"/>
<dbReference type="ProteomicsDB" id="275684">
    <molecule id="Q3US41-1"/>
</dbReference>
<dbReference type="ProteomicsDB" id="275685">
    <molecule id="Q3US41-2"/>
</dbReference>
<dbReference type="ProteomicsDB" id="275686">
    <molecule id="Q3US41-3"/>
</dbReference>
<dbReference type="ProteomicsDB" id="275687">
    <molecule id="Q3US41-4"/>
</dbReference>
<dbReference type="ProteomicsDB" id="275688">
    <molecule id="Q3US41-5"/>
</dbReference>
<dbReference type="Antibodypedia" id="6696">
    <property type="antibodies" value="149 antibodies from 29 providers"/>
</dbReference>
<dbReference type="DNASU" id="207920"/>
<dbReference type="Ensembl" id="ENSMUST00000108310.8">
    <molecule id="Q3US41-5"/>
    <property type="protein sequence ID" value="ENSMUSP00000103946.2"/>
    <property type="gene ID" value="ENSMUSG00000040728.16"/>
</dbReference>
<dbReference type="Ensembl" id="ENSMUST00000108313.8">
    <molecule id="Q3US41-3"/>
    <property type="protein sequence ID" value="ENSMUSP00000103949.2"/>
    <property type="gene ID" value="ENSMUSG00000040728.16"/>
</dbReference>
<dbReference type="GeneID" id="207920"/>
<dbReference type="KEGG" id="mmu:207920"/>
<dbReference type="UCSC" id="uc008rzk.3">
    <molecule id="Q3US41-3"/>
    <property type="organism name" value="mouse"/>
</dbReference>
<dbReference type="UCSC" id="uc008rzl.3">
    <molecule id="Q3US41-2"/>
    <property type="organism name" value="mouse"/>
</dbReference>
<dbReference type="UCSC" id="uc008rzm.3">
    <molecule id="Q3US41-1"/>
    <property type="organism name" value="mouse"/>
</dbReference>
<dbReference type="UCSC" id="uc008rzn.1">
    <molecule id="Q3US41-4"/>
    <property type="organism name" value="mouse"/>
</dbReference>
<dbReference type="AGR" id="MGI:1917326"/>
<dbReference type="CTD" id="54845"/>
<dbReference type="MGI" id="MGI:1917326">
    <property type="gene designation" value="Esrp1"/>
</dbReference>
<dbReference type="VEuPathDB" id="HostDB:ENSMUSG00000040728"/>
<dbReference type="eggNOG" id="KOG1365">
    <property type="taxonomic scope" value="Eukaryota"/>
</dbReference>
<dbReference type="GeneTree" id="ENSGT00940000159511"/>
<dbReference type="HOGENOM" id="CLU_008009_2_1_1"/>
<dbReference type="InParanoid" id="Q3US41"/>
<dbReference type="OrthoDB" id="431068at2759"/>
<dbReference type="PhylomeDB" id="Q3US41"/>
<dbReference type="BioGRID-ORCS" id="207920">
    <property type="hits" value="3 hits in 78 CRISPR screens"/>
</dbReference>
<dbReference type="ChiTaRS" id="Esrp1">
    <property type="organism name" value="mouse"/>
</dbReference>
<dbReference type="PRO" id="PR:Q3US41"/>
<dbReference type="Proteomes" id="UP000000589">
    <property type="component" value="Chromosome 4"/>
</dbReference>
<dbReference type="RNAct" id="Q3US41">
    <property type="molecule type" value="protein"/>
</dbReference>
<dbReference type="Bgee" id="ENSMUSG00000040728">
    <property type="expression patterns" value="Expressed in tail skin and 157 other cell types or tissues"/>
</dbReference>
<dbReference type="ExpressionAtlas" id="Q3US41">
    <property type="expression patterns" value="baseline and differential"/>
</dbReference>
<dbReference type="GO" id="GO:0005634">
    <property type="term" value="C:nucleus"/>
    <property type="evidence" value="ECO:0000250"/>
    <property type="project" value="UniProtKB"/>
</dbReference>
<dbReference type="GO" id="GO:0003729">
    <property type="term" value="F:mRNA binding"/>
    <property type="evidence" value="ECO:0000250"/>
    <property type="project" value="UniProtKB"/>
</dbReference>
<dbReference type="GO" id="GO:0000380">
    <property type="term" value="P:alternative mRNA splicing, via spliceosome"/>
    <property type="evidence" value="ECO:0000316"/>
    <property type="project" value="MGI"/>
</dbReference>
<dbReference type="GO" id="GO:0060445">
    <property type="term" value="P:branching involved in salivary gland morphogenesis"/>
    <property type="evidence" value="ECO:0000316"/>
    <property type="project" value="MGI"/>
</dbReference>
<dbReference type="GO" id="GO:0050673">
    <property type="term" value="P:epithelial cell proliferation"/>
    <property type="evidence" value="ECO:0000316"/>
    <property type="project" value="MGI"/>
</dbReference>
<dbReference type="GO" id="GO:0060441">
    <property type="term" value="P:epithelial tube branching involved in lung morphogenesis"/>
    <property type="evidence" value="ECO:0000316"/>
    <property type="project" value="MGI"/>
</dbReference>
<dbReference type="GO" id="GO:0050679">
    <property type="term" value="P:positive regulation of epithelial cell proliferation"/>
    <property type="evidence" value="ECO:0000316"/>
    <property type="project" value="MGI"/>
</dbReference>
<dbReference type="GO" id="GO:0042669">
    <property type="term" value="P:regulation of inner ear auditory receptor cell fate specification"/>
    <property type="evidence" value="ECO:0000315"/>
    <property type="project" value="UniProtKB"/>
</dbReference>
<dbReference type="GO" id="GO:0043484">
    <property type="term" value="P:regulation of RNA splicing"/>
    <property type="evidence" value="ECO:0000315"/>
    <property type="project" value="UniProtKB"/>
</dbReference>
<dbReference type="CDD" id="cd12739">
    <property type="entry name" value="RRM2_ESRP1"/>
    <property type="match status" value="1"/>
</dbReference>
<dbReference type="CDD" id="cd12742">
    <property type="entry name" value="RRM3_ESRP1_ESRP2"/>
    <property type="match status" value="1"/>
</dbReference>
<dbReference type="FunFam" id="3.30.70.330:FF:000041">
    <property type="entry name" value="Epithelial splicing regulatory protein 1"/>
    <property type="match status" value="1"/>
</dbReference>
<dbReference type="FunFam" id="3.30.70.330:FF:000070">
    <property type="entry name" value="Epithelial splicing regulatory protein 1"/>
    <property type="match status" value="1"/>
</dbReference>
<dbReference type="FunFam" id="3.30.420.10:FF:000023">
    <property type="entry name" value="epithelial splicing regulatory protein 1 isoform X1"/>
    <property type="match status" value="1"/>
</dbReference>
<dbReference type="FunFam" id="3.30.70.330:FF:000056">
    <property type="entry name" value="epithelial splicing regulatory protein 1 isoform X1"/>
    <property type="match status" value="1"/>
</dbReference>
<dbReference type="Gene3D" id="3.30.70.330">
    <property type="match status" value="3"/>
</dbReference>
<dbReference type="Gene3D" id="3.30.420.10">
    <property type="entry name" value="Ribonuclease H-like superfamily/Ribonuclease H"/>
    <property type="match status" value="1"/>
</dbReference>
<dbReference type="InterPro" id="IPR050666">
    <property type="entry name" value="ESRP"/>
</dbReference>
<dbReference type="InterPro" id="IPR012677">
    <property type="entry name" value="Nucleotide-bd_a/b_plait_sf"/>
</dbReference>
<dbReference type="InterPro" id="IPR035979">
    <property type="entry name" value="RBD_domain_sf"/>
</dbReference>
<dbReference type="InterPro" id="IPR012337">
    <property type="entry name" value="RNaseH-like_sf"/>
</dbReference>
<dbReference type="InterPro" id="IPR036397">
    <property type="entry name" value="RNaseH_sf"/>
</dbReference>
<dbReference type="InterPro" id="IPR000504">
    <property type="entry name" value="RRM_dom"/>
</dbReference>
<dbReference type="PANTHER" id="PTHR13976">
    <property type="entry name" value="HETEROGENEOUS NUCLEAR RIBONUCLEOPROTEIN-RELATED"/>
    <property type="match status" value="1"/>
</dbReference>
<dbReference type="SMART" id="SM00360">
    <property type="entry name" value="RRM"/>
    <property type="match status" value="3"/>
</dbReference>
<dbReference type="SUPFAM" id="SSF53098">
    <property type="entry name" value="Ribonuclease H-like"/>
    <property type="match status" value="1"/>
</dbReference>
<dbReference type="SUPFAM" id="SSF54928">
    <property type="entry name" value="RNA-binding domain, RBD"/>
    <property type="match status" value="3"/>
</dbReference>
<dbReference type="PROSITE" id="PS50102">
    <property type="entry name" value="RRM"/>
    <property type="match status" value="2"/>
</dbReference>
<proteinExistence type="evidence at protein level"/>
<sequence>MTASPDYLVVLFGITAGATGAKLGSDEKELILLLWKVVDLANKKVGQLHEVLVRPDQLELTEDCKEETKIDAENLSSAPQLDQALRQFNQSVSNELNIGVGTSFCLCTDGQLHIRQILHPEASKKNVLLPECFYSFFDLRKEFKKCCPGSPDIDKLDVAAMTESLNFEKSDSVSRYGASQVEDMGNIILAMISEPYNHRFSDPERVNYKFESGTCKMELIDDSTVVRARGLPWQSSDQDIARFFKGLNIAKGGAALCLNAQGRRNGEALVRFVSEEHRDLALQRHKHHMGTRYIEVYKATGEDFLKIAGGTSNEVAQFLSKENQVIVRMRGLPFTATAEEVVAFFGQHCPITGGKEGILFVTYPDGRPTGDAFVLFACEEYAQNALRKHKELLGKRYIELFRSTAAEVQQVLNRFSSAPLIPLPTPPIIPVLPQQFVPPTNVRDCIRLRGLPYAATIEDILDFLGEFSTDIRTHGVHMVLNHQGRPSGDAFIQMKSTDRAFMAAQKYHKKTMKDRYVEVFQCSAEEMNFVLMGGTLNRNGLSPPPCKLPCLSPPSYTFPAPTAVIPTEAAIYQPSLLLNPRALQPSTAYYPAGTQLFMNYTAYYPSPPGSPNSLGYFPTAANLSSVPPQPGTVVRMQGLAYNTGVKEILNFFQGYQYATEDGLVHTNDQARTLPKEWVCI</sequence>
<accession>Q3US41</accession>
<accession>A2AJQ4</accession>
<accession>A2AJQ5</accession>
<accession>A2AJQ6</accession>
<accession>A2AJQ7</accession>
<accession>A2AJQ8</accession>
<accession>Q3TLQ3</accession>
<accession>Q6PCL4</accession>
<accession>Q8C9F5</accession>
<accession>Q8K0G2</accession>
<feature type="chain" id="PRO_0000273047" description="Epithelial splicing regulatory protein 1">
    <location>
        <begin position="1"/>
        <end position="680"/>
    </location>
</feature>
<feature type="domain" description="RRM 1" evidence="4">
    <location>
        <begin position="224"/>
        <end position="301"/>
    </location>
</feature>
<feature type="domain" description="RRM 2" evidence="4">
    <location>
        <begin position="325"/>
        <end position="405"/>
    </location>
</feature>
<feature type="domain" description="RRM 3" evidence="4">
    <location>
        <begin position="444"/>
        <end position="524"/>
    </location>
</feature>
<feature type="modified residue" description="Phosphoserine" evidence="3">
    <location>
        <position position="542"/>
    </location>
</feature>
<feature type="modified residue" description="Omega-N-methylarginine" evidence="2">
    <location>
        <position position="581"/>
    </location>
</feature>
<feature type="splice variant" id="VSP_022468" description="In isoform 2, isoform 3, isoform 4 and isoform 5." evidence="7 8">
    <original>C</original>
    <variation>CS</variation>
    <location>
        <position position="215"/>
    </location>
</feature>
<feature type="splice variant" id="VSP_022469" description="In isoform 4." evidence="8">
    <original>GRPSGDAFIQMKSTDRAFMAAQKYHKKTMK</original>
    <variation>VRGVIGKCVCSFLRPSAPSSITAQRFTLPL</variation>
    <location>
        <begin position="484"/>
        <end position="513"/>
    </location>
</feature>
<feature type="splice variant" id="VSP_022470" description="In isoform 4." evidence="8">
    <location>
        <begin position="514"/>
        <end position="680"/>
    </location>
</feature>
<feature type="splice variant" id="VSP_022471" description="In isoform 3 and isoform 5." evidence="7">
    <location>
        <begin position="545"/>
        <end position="548"/>
    </location>
</feature>
<feature type="splice variant" id="VSP_022472" description="In isoform 2 and isoform 3." evidence="7">
    <original>P</original>
    <variation>V</variation>
    <location>
        <position position="607"/>
    </location>
</feature>
<feature type="splice variant" id="VSP_022473" description="In isoform 2 and isoform 3." evidence="7">
    <location>
        <begin position="608"/>
        <end position="680"/>
    </location>
</feature>
<feature type="sequence conflict" description="In Ref. 1; BAE24496." evidence="9" ref="1">
    <original>H</original>
    <variation>N</variation>
    <location>
        <position position="113"/>
    </location>
</feature>
<feature type="sequence conflict" description="In Ref. 4; AAH31468." evidence="9" ref="4">
    <original>V</original>
    <variation>L</variation>
    <location>
        <position position="127"/>
    </location>
</feature>
<feature type="sequence conflict" description="In Ref. 4; AAH31468." evidence="9" ref="4">
    <original>V</original>
    <variation>L</variation>
    <location>
        <position position="206"/>
    </location>
</feature>
<reference key="1">
    <citation type="journal article" date="2005" name="Science">
        <title>The transcriptional landscape of the mammalian genome.</title>
        <authorList>
            <person name="Carninci P."/>
            <person name="Kasukawa T."/>
            <person name="Katayama S."/>
            <person name="Gough J."/>
            <person name="Frith M.C."/>
            <person name="Maeda N."/>
            <person name="Oyama R."/>
            <person name="Ravasi T."/>
            <person name="Lenhard B."/>
            <person name="Wells C."/>
            <person name="Kodzius R."/>
            <person name="Shimokawa K."/>
            <person name="Bajic V.B."/>
            <person name="Brenner S.E."/>
            <person name="Batalov S."/>
            <person name="Forrest A.R."/>
            <person name="Zavolan M."/>
            <person name="Davis M.J."/>
            <person name="Wilming L.G."/>
            <person name="Aidinis V."/>
            <person name="Allen J.E."/>
            <person name="Ambesi-Impiombato A."/>
            <person name="Apweiler R."/>
            <person name="Aturaliya R.N."/>
            <person name="Bailey T.L."/>
            <person name="Bansal M."/>
            <person name="Baxter L."/>
            <person name="Beisel K.W."/>
            <person name="Bersano T."/>
            <person name="Bono H."/>
            <person name="Chalk A.M."/>
            <person name="Chiu K.P."/>
            <person name="Choudhary V."/>
            <person name="Christoffels A."/>
            <person name="Clutterbuck D.R."/>
            <person name="Crowe M.L."/>
            <person name="Dalla E."/>
            <person name="Dalrymple B.P."/>
            <person name="de Bono B."/>
            <person name="Della Gatta G."/>
            <person name="di Bernardo D."/>
            <person name="Down T."/>
            <person name="Engstrom P."/>
            <person name="Fagiolini M."/>
            <person name="Faulkner G."/>
            <person name="Fletcher C.F."/>
            <person name="Fukushima T."/>
            <person name="Furuno M."/>
            <person name="Futaki S."/>
            <person name="Gariboldi M."/>
            <person name="Georgii-Hemming P."/>
            <person name="Gingeras T.R."/>
            <person name="Gojobori T."/>
            <person name="Green R.E."/>
            <person name="Gustincich S."/>
            <person name="Harbers M."/>
            <person name="Hayashi Y."/>
            <person name="Hensch T.K."/>
            <person name="Hirokawa N."/>
            <person name="Hill D."/>
            <person name="Huminiecki L."/>
            <person name="Iacono M."/>
            <person name="Ikeo K."/>
            <person name="Iwama A."/>
            <person name="Ishikawa T."/>
            <person name="Jakt M."/>
            <person name="Kanapin A."/>
            <person name="Katoh M."/>
            <person name="Kawasawa Y."/>
            <person name="Kelso J."/>
            <person name="Kitamura H."/>
            <person name="Kitano H."/>
            <person name="Kollias G."/>
            <person name="Krishnan S.P."/>
            <person name="Kruger A."/>
            <person name="Kummerfeld S.K."/>
            <person name="Kurochkin I.V."/>
            <person name="Lareau L.F."/>
            <person name="Lazarevic D."/>
            <person name="Lipovich L."/>
            <person name="Liu J."/>
            <person name="Liuni S."/>
            <person name="McWilliam S."/>
            <person name="Madan Babu M."/>
            <person name="Madera M."/>
            <person name="Marchionni L."/>
            <person name="Matsuda H."/>
            <person name="Matsuzawa S."/>
            <person name="Miki H."/>
            <person name="Mignone F."/>
            <person name="Miyake S."/>
            <person name="Morris K."/>
            <person name="Mottagui-Tabar S."/>
            <person name="Mulder N."/>
            <person name="Nakano N."/>
            <person name="Nakauchi H."/>
            <person name="Ng P."/>
            <person name="Nilsson R."/>
            <person name="Nishiguchi S."/>
            <person name="Nishikawa S."/>
            <person name="Nori F."/>
            <person name="Ohara O."/>
            <person name="Okazaki Y."/>
            <person name="Orlando V."/>
            <person name="Pang K.C."/>
            <person name="Pavan W.J."/>
            <person name="Pavesi G."/>
            <person name="Pesole G."/>
            <person name="Petrovsky N."/>
            <person name="Piazza S."/>
            <person name="Reed J."/>
            <person name="Reid J.F."/>
            <person name="Ring B.Z."/>
            <person name="Ringwald M."/>
            <person name="Rost B."/>
            <person name="Ruan Y."/>
            <person name="Salzberg S.L."/>
            <person name="Sandelin A."/>
            <person name="Schneider C."/>
            <person name="Schoenbach C."/>
            <person name="Sekiguchi K."/>
            <person name="Semple C.A."/>
            <person name="Seno S."/>
            <person name="Sessa L."/>
            <person name="Sheng Y."/>
            <person name="Shibata Y."/>
            <person name="Shimada H."/>
            <person name="Shimada K."/>
            <person name="Silva D."/>
            <person name="Sinclair B."/>
            <person name="Sperling S."/>
            <person name="Stupka E."/>
            <person name="Sugiura K."/>
            <person name="Sultana R."/>
            <person name="Takenaka Y."/>
            <person name="Taki K."/>
            <person name="Tammoja K."/>
            <person name="Tan S.L."/>
            <person name="Tang S."/>
            <person name="Taylor M.S."/>
            <person name="Tegner J."/>
            <person name="Teichmann S.A."/>
            <person name="Ueda H.R."/>
            <person name="van Nimwegen E."/>
            <person name="Verardo R."/>
            <person name="Wei C.L."/>
            <person name="Yagi K."/>
            <person name="Yamanishi H."/>
            <person name="Zabarovsky E."/>
            <person name="Zhu S."/>
            <person name="Zimmer A."/>
            <person name="Hide W."/>
            <person name="Bult C."/>
            <person name="Grimmond S.M."/>
            <person name="Teasdale R.D."/>
            <person name="Liu E.T."/>
            <person name="Brusic V."/>
            <person name="Quackenbush J."/>
            <person name="Wahlestedt C."/>
            <person name="Mattick J.S."/>
            <person name="Hume D.A."/>
            <person name="Kai C."/>
            <person name="Sasaki D."/>
            <person name="Tomaru Y."/>
            <person name="Fukuda S."/>
            <person name="Kanamori-Katayama M."/>
            <person name="Suzuki M."/>
            <person name="Aoki J."/>
            <person name="Arakawa T."/>
            <person name="Iida J."/>
            <person name="Imamura K."/>
            <person name="Itoh M."/>
            <person name="Kato T."/>
            <person name="Kawaji H."/>
            <person name="Kawagashira N."/>
            <person name="Kawashima T."/>
            <person name="Kojima M."/>
            <person name="Kondo S."/>
            <person name="Konno H."/>
            <person name="Nakano K."/>
            <person name="Ninomiya N."/>
            <person name="Nishio T."/>
            <person name="Okada M."/>
            <person name="Plessy C."/>
            <person name="Shibata K."/>
            <person name="Shiraki T."/>
            <person name="Suzuki S."/>
            <person name="Tagami M."/>
            <person name="Waki K."/>
            <person name="Watahiki A."/>
            <person name="Okamura-Oho Y."/>
            <person name="Suzuki H."/>
            <person name="Kawai J."/>
            <person name="Hayashizaki Y."/>
        </authorList>
    </citation>
    <scope>NUCLEOTIDE SEQUENCE [LARGE SCALE MRNA] (ISOFORM 1)</scope>
    <scope>NUCLEOTIDE SEQUENCE [LARGE SCALE MRNA] OF 14-680 (ISOFORM 4)</scope>
    <source>
        <strain>C57BL/6J</strain>
        <tissue>Head</tissue>
        <tissue>Mammary gland</tissue>
        <tissue>Thymus</tissue>
    </source>
</reference>
<reference key="2">
    <citation type="journal article" date="2009" name="PLoS Biol.">
        <title>Lineage-specific biology revealed by a finished genome assembly of the mouse.</title>
        <authorList>
            <person name="Church D.M."/>
            <person name="Goodstadt L."/>
            <person name="Hillier L.W."/>
            <person name="Zody M.C."/>
            <person name="Goldstein S."/>
            <person name="She X."/>
            <person name="Bult C.J."/>
            <person name="Agarwala R."/>
            <person name="Cherry J.L."/>
            <person name="DiCuccio M."/>
            <person name="Hlavina W."/>
            <person name="Kapustin Y."/>
            <person name="Meric P."/>
            <person name="Maglott D."/>
            <person name="Birtle Z."/>
            <person name="Marques A.C."/>
            <person name="Graves T."/>
            <person name="Zhou S."/>
            <person name="Teague B."/>
            <person name="Potamousis K."/>
            <person name="Churas C."/>
            <person name="Place M."/>
            <person name="Herschleb J."/>
            <person name="Runnheim R."/>
            <person name="Forrest D."/>
            <person name="Amos-Landgraf J."/>
            <person name="Schwartz D.C."/>
            <person name="Cheng Z."/>
            <person name="Lindblad-Toh K."/>
            <person name="Eichler E.E."/>
            <person name="Ponting C.P."/>
        </authorList>
    </citation>
    <scope>NUCLEOTIDE SEQUENCE [LARGE SCALE GENOMIC DNA]</scope>
    <source>
        <strain>C57BL/6J</strain>
    </source>
</reference>
<reference key="3">
    <citation type="submission" date="2005-09" db="EMBL/GenBank/DDBJ databases">
        <authorList>
            <person name="Mural R.J."/>
            <person name="Adams M.D."/>
            <person name="Myers E.W."/>
            <person name="Smith H.O."/>
            <person name="Venter J.C."/>
        </authorList>
    </citation>
    <scope>NUCLEOTIDE SEQUENCE [LARGE SCALE GENOMIC DNA]</scope>
</reference>
<reference key="4">
    <citation type="journal article" date="2004" name="Genome Res.">
        <title>The status, quality, and expansion of the NIH full-length cDNA project: the Mammalian Gene Collection (MGC).</title>
        <authorList>
            <consortium name="The MGC Project Team"/>
        </authorList>
    </citation>
    <scope>NUCLEOTIDE SEQUENCE [LARGE SCALE MRNA] (ISOFORM 2)</scope>
    <scope>NUCLEOTIDE SEQUENCE [LARGE SCALE MRNA] OF 118-607 (ISOFORM 3)</scope>
    <source>
        <strain>Czech II</strain>
        <strain>FVB/N</strain>
        <tissue>Mammary tumor</tissue>
    </source>
</reference>
<reference key="5">
    <citation type="journal article" date="2009" name="Mol. Cell">
        <title>ESRP1 and ESRP2 are epithelial cell-type-specific regulators of FGFR2 splicing.</title>
        <authorList>
            <person name="Warzecha C.C."/>
            <person name="Sato T.K."/>
            <person name="Nabet B."/>
            <person name="Hogenesch J.B."/>
            <person name="Carstens R.P."/>
        </authorList>
    </citation>
    <scope>TISSUE SPECIFICITY</scope>
</reference>
<reference key="6">
    <citation type="journal article" date="2010" name="Cell">
        <title>A tissue-specific atlas of mouse protein phosphorylation and expression.</title>
        <authorList>
            <person name="Huttlin E.L."/>
            <person name="Jedrychowski M.P."/>
            <person name="Elias J.E."/>
            <person name="Goswami T."/>
            <person name="Rad R."/>
            <person name="Beausoleil S.A."/>
            <person name="Villen J."/>
            <person name="Haas W."/>
            <person name="Sowa M.E."/>
            <person name="Gygi S.P."/>
        </authorList>
    </citation>
    <scope>IDENTIFICATION BY MASS SPECTROMETRY [LARGE SCALE ANALYSIS]</scope>
    <source>
        <tissue>Pancreas</tissue>
    </source>
</reference>
<reference key="7">
    <citation type="journal article" date="2017" name="Dev. Cell">
        <title>ESRP1 mutations cause hearing loss due to defects in alternative splicing that disrupt cochlear development.</title>
        <authorList>
            <person name="Rohacek A.M."/>
            <person name="Bebee T.W."/>
            <person name="Tilton R.K."/>
            <person name="Radens C.M."/>
            <person name="McDermott-Roe C."/>
            <person name="Peart N."/>
            <person name="Kaur M."/>
            <person name="Zaykaner M."/>
            <person name="Cieply B."/>
            <person name="Musunuru K."/>
            <person name="Barash Y."/>
            <person name="Germiller J.A."/>
            <person name="Krantz I.D."/>
            <person name="Carstens R.P."/>
            <person name="Epstein D.J."/>
        </authorList>
    </citation>
    <scope>FUNCTION</scope>
    <scope>DEVELOPMENTAL STAGE</scope>
    <scope>DISRUPTION PHENOTYPE</scope>
</reference>
<name>ESRP1_MOUSE</name>
<gene>
    <name type="primary">Esrp1</name>
    <name type="synonym">Rbm35a</name>
</gene>